<proteinExistence type="inferred from homology"/>
<sequence>MKKQVTIYTDGACSGNPGPGGWGALLMFGSITREVSGSSPATTNNRMELGAAIEALALLKEPCLVDLYSDSSYLVNAINNGWLQRWQRNSWQTAAKKSVENIDLWQKLIKLLKVHEVRFHKVKGHSDNAYNNRCDQLAREAIKKTS</sequence>
<evidence type="ECO:0000255" key="1">
    <source>
        <dbReference type="HAMAP-Rule" id="MF_00042"/>
    </source>
</evidence>
<evidence type="ECO:0000255" key="2">
    <source>
        <dbReference type="PROSITE-ProRule" id="PRU00408"/>
    </source>
</evidence>
<protein>
    <recommendedName>
        <fullName evidence="1">Ribonuclease H</fullName>
        <shortName evidence="1">RNase H</shortName>
        <ecNumber evidence="1">3.1.26.4</ecNumber>
    </recommendedName>
</protein>
<keyword id="KW-0963">Cytoplasm</keyword>
<keyword id="KW-0255">Endonuclease</keyword>
<keyword id="KW-0378">Hydrolase</keyword>
<keyword id="KW-0460">Magnesium</keyword>
<keyword id="KW-0479">Metal-binding</keyword>
<keyword id="KW-0540">Nuclease</keyword>
<comment type="function">
    <text evidence="1">Endonuclease that specifically degrades the RNA of RNA-DNA hybrids.</text>
</comment>
<comment type="catalytic activity">
    <reaction evidence="1">
        <text>Endonucleolytic cleavage to 5'-phosphomonoester.</text>
        <dbReference type="EC" id="3.1.26.4"/>
    </reaction>
</comment>
<comment type="cofactor">
    <cofactor evidence="1">
        <name>Mg(2+)</name>
        <dbReference type="ChEBI" id="CHEBI:18420"/>
    </cofactor>
    <text evidence="1">Binds 1 Mg(2+) ion per subunit. May bind a second metal ion at a regulatory site, or after substrate binding.</text>
</comment>
<comment type="subunit">
    <text evidence="1">Monomer.</text>
</comment>
<comment type="subcellular location">
    <subcellularLocation>
        <location evidence="1">Cytoplasm</location>
    </subcellularLocation>
</comment>
<comment type="similarity">
    <text evidence="1">Belongs to the RNase H family.</text>
</comment>
<name>RNH_CHLCH</name>
<accession>Q3APT0</accession>
<feature type="chain" id="PRO_0000332575" description="Ribonuclease H">
    <location>
        <begin position="1"/>
        <end position="146"/>
    </location>
</feature>
<feature type="domain" description="RNase H type-1" evidence="2">
    <location>
        <begin position="1"/>
        <end position="143"/>
    </location>
</feature>
<feature type="binding site" evidence="1">
    <location>
        <position position="10"/>
    </location>
    <ligand>
        <name>Mg(2+)</name>
        <dbReference type="ChEBI" id="CHEBI:18420"/>
        <label>1</label>
    </ligand>
</feature>
<feature type="binding site" evidence="1">
    <location>
        <position position="10"/>
    </location>
    <ligand>
        <name>Mg(2+)</name>
        <dbReference type="ChEBI" id="CHEBI:18420"/>
        <label>2</label>
    </ligand>
</feature>
<feature type="binding site" evidence="1">
    <location>
        <position position="48"/>
    </location>
    <ligand>
        <name>Mg(2+)</name>
        <dbReference type="ChEBI" id="CHEBI:18420"/>
        <label>1</label>
    </ligand>
</feature>
<feature type="binding site" evidence="1">
    <location>
        <position position="70"/>
    </location>
    <ligand>
        <name>Mg(2+)</name>
        <dbReference type="ChEBI" id="CHEBI:18420"/>
        <label>1</label>
    </ligand>
</feature>
<feature type="binding site" evidence="1">
    <location>
        <position position="135"/>
    </location>
    <ligand>
        <name>Mg(2+)</name>
        <dbReference type="ChEBI" id="CHEBI:18420"/>
        <label>2</label>
    </ligand>
</feature>
<dbReference type="EC" id="3.1.26.4" evidence="1"/>
<dbReference type="EMBL" id="CP000108">
    <property type="protein sequence ID" value="ABB28995.1"/>
    <property type="molecule type" value="Genomic_DNA"/>
</dbReference>
<dbReference type="SMR" id="Q3APT0"/>
<dbReference type="STRING" id="340177.Cag_1744"/>
<dbReference type="KEGG" id="cch:Cag_1744"/>
<dbReference type="eggNOG" id="COG0328">
    <property type="taxonomic scope" value="Bacteria"/>
</dbReference>
<dbReference type="HOGENOM" id="CLU_030894_6_2_10"/>
<dbReference type="OrthoDB" id="7845843at2"/>
<dbReference type="GO" id="GO:0005737">
    <property type="term" value="C:cytoplasm"/>
    <property type="evidence" value="ECO:0007669"/>
    <property type="project" value="UniProtKB-SubCell"/>
</dbReference>
<dbReference type="GO" id="GO:0000287">
    <property type="term" value="F:magnesium ion binding"/>
    <property type="evidence" value="ECO:0007669"/>
    <property type="project" value="UniProtKB-UniRule"/>
</dbReference>
<dbReference type="GO" id="GO:0003676">
    <property type="term" value="F:nucleic acid binding"/>
    <property type="evidence" value="ECO:0007669"/>
    <property type="project" value="InterPro"/>
</dbReference>
<dbReference type="GO" id="GO:0004523">
    <property type="term" value="F:RNA-DNA hybrid ribonuclease activity"/>
    <property type="evidence" value="ECO:0007669"/>
    <property type="project" value="UniProtKB-UniRule"/>
</dbReference>
<dbReference type="GO" id="GO:0043137">
    <property type="term" value="P:DNA replication, removal of RNA primer"/>
    <property type="evidence" value="ECO:0007669"/>
    <property type="project" value="TreeGrafter"/>
</dbReference>
<dbReference type="CDD" id="cd09278">
    <property type="entry name" value="RNase_HI_prokaryote_like"/>
    <property type="match status" value="1"/>
</dbReference>
<dbReference type="FunFam" id="3.30.420.10:FF:000089">
    <property type="entry name" value="Ribonuclease H"/>
    <property type="match status" value="1"/>
</dbReference>
<dbReference type="Gene3D" id="3.30.420.10">
    <property type="entry name" value="Ribonuclease H-like superfamily/Ribonuclease H"/>
    <property type="match status" value="1"/>
</dbReference>
<dbReference type="HAMAP" id="MF_00042">
    <property type="entry name" value="RNase_H"/>
    <property type="match status" value="1"/>
</dbReference>
<dbReference type="InterPro" id="IPR050092">
    <property type="entry name" value="RNase_H"/>
</dbReference>
<dbReference type="InterPro" id="IPR012337">
    <property type="entry name" value="RNaseH-like_sf"/>
</dbReference>
<dbReference type="InterPro" id="IPR002156">
    <property type="entry name" value="RNaseH_domain"/>
</dbReference>
<dbReference type="InterPro" id="IPR036397">
    <property type="entry name" value="RNaseH_sf"/>
</dbReference>
<dbReference type="InterPro" id="IPR022892">
    <property type="entry name" value="RNaseHI"/>
</dbReference>
<dbReference type="NCBIfam" id="NF001236">
    <property type="entry name" value="PRK00203.1"/>
    <property type="match status" value="1"/>
</dbReference>
<dbReference type="PANTHER" id="PTHR10642">
    <property type="entry name" value="RIBONUCLEASE H1"/>
    <property type="match status" value="1"/>
</dbReference>
<dbReference type="PANTHER" id="PTHR10642:SF26">
    <property type="entry name" value="RIBONUCLEASE H1"/>
    <property type="match status" value="1"/>
</dbReference>
<dbReference type="Pfam" id="PF00075">
    <property type="entry name" value="RNase_H"/>
    <property type="match status" value="1"/>
</dbReference>
<dbReference type="SUPFAM" id="SSF53098">
    <property type="entry name" value="Ribonuclease H-like"/>
    <property type="match status" value="1"/>
</dbReference>
<dbReference type="PROSITE" id="PS50879">
    <property type="entry name" value="RNASE_H_1"/>
    <property type="match status" value="1"/>
</dbReference>
<reference key="1">
    <citation type="submission" date="2005-08" db="EMBL/GenBank/DDBJ databases">
        <title>Complete sequence of Chlorobium chlorochromatii CaD3.</title>
        <authorList>
            <consortium name="US DOE Joint Genome Institute"/>
            <person name="Copeland A."/>
            <person name="Lucas S."/>
            <person name="Lapidus A."/>
            <person name="Barry K."/>
            <person name="Detter J.C."/>
            <person name="Glavina T."/>
            <person name="Hammon N."/>
            <person name="Israni S."/>
            <person name="Pitluck S."/>
            <person name="Bryant D."/>
            <person name="Schmutz J."/>
            <person name="Larimer F."/>
            <person name="Land M."/>
            <person name="Kyrpides N."/>
            <person name="Ivanova N."/>
            <person name="Richardson P."/>
        </authorList>
    </citation>
    <scope>NUCLEOTIDE SEQUENCE [LARGE SCALE GENOMIC DNA]</scope>
    <source>
        <strain>CaD3</strain>
    </source>
</reference>
<gene>
    <name evidence="1" type="primary">rnhA</name>
    <name type="ordered locus">Cag_1744</name>
</gene>
<organism>
    <name type="scientific">Chlorobium chlorochromatii (strain CaD3)</name>
    <dbReference type="NCBI Taxonomy" id="340177"/>
    <lineage>
        <taxon>Bacteria</taxon>
        <taxon>Pseudomonadati</taxon>
        <taxon>Chlorobiota</taxon>
        <taxon>Chlorobiia</taxon>
        <taxon>Chlorobiales</taxon>
        <taxon>Chlorobiaceae</taxon>
        <taxon>Chlorobium/Pelodictyon group</taxon>
        <taxon>Chlorobium</taxon>
    </lineage>
</organism>